<feature type="initiator methionine" description="Removed" evidence="2">
    <location>
        <position position="1"/>
    </location>
</feature>
<feature type="chain" id="PRO_0000204399" description="Photosystem I reaction center subunit IV">
    <location>
        <begin position="2"/>
        <end position="70"/>
    </location>
</feature>
<feature type="strand" evidence="4">
    <location>
        <begin position="7"/>
        <end position="10"/>
    </location>
</feature>
<feature type="strand" evidence="4">
    <location>
        <begin position="21"/>
        <end position="27"/>
    </location>
</feature>
<feature type="strand" evidence="4">
    <location>
        <begin position="36"/>
        <end position="39"/>
    </location>
</feature>
<feature type="strand" evidence="4">
    <location>
        <begin position="50"/>
        <end position="53"/>
    </location>
</feature>
<feature type="helix" evidence="5">
    <location>
        <begin position="55"/>
        <end position="57"/>
    </location>
</feature>
<feature type="strand" evidence="4">
    <location>
        <begin position="58"/>
        <end position="60"/>
    </location>
</feature>
<accession>P58575</accession>
<organism>
    <name type="scientific">Nostoc sp. (strain PCC 7120 / SAG 25.82 / UTEX 2576)</name>
    <dbReference type="NCBI Taxonomy" id="103690"/>
    <lineage>
        <taxon>Bacteria</taxon>
        <taxon>Bacillati</taxon>
        <taxon>Cyanobacteriota</taxon>
        <taxon>Cyanophyceae</taxon>
        <taxon>Nostocales</taxon>
        <taxon>Nostocaceae</taxon>
        <taxon>Nostoc</taxon>
    </lineage>
</organism>
<gene>
    <name type="primary">psaE</name>
    <name type="ordered locus">asr4319</name>
</gene>
<dbReference type="EMBL" id="BA000019">
    <property type="protein sequence ID" value="BAB76018.1"/>
    <property type="molecule type" value="Genomic_DNA"/>
</dbReference>
<dbReference type="PIR" id="AH2345">
    <property type="entry name" value="AH2345"/>
</dbReference>
<dbReference type="RefSeq" id="WP_010998457.1">
    <property type="nucleotide sequence ID" value="NZ_RSCN01000027.1"/>
</dbReference>
<dbReference type="PDB" id="6JEO">
    <property type="method" value="EM"/>
    <property type="resolution" value="3.30 A"/>
    <property type="chains" value="aE/bE/cE/dE=1-70"/>
</dbReference>
<dbReference type="PDB" id="6K61">
    <property type="method" value="EM"/>
    <property type="resolution" value="2.37 A"/>
    <property type="chains" value="E/e=1-70"/>
</dbReference>
<dbReference type="PDB" id="6TCL">
    <property type="method" value="EM"/>
    <property type="resolution" value="3.20 A"/>
    <property type="chains" value="E/EE=2-64, E1/E2=2-61"/>
</dbReference>
<dbReference type="PDB" id="7Y3F">
    <property type="method" value="EM"/>
    <property type="resolution" value="2.62 A"/>
    <property type="chains" value="E=1-70"/>
</dbReference>
<dbReference type="PDBsum" id="6JEO"/>
<dbReference type="PDBsum" id="6K61"/>
<dbReference type="PDBsum" id="6TCL"/>
<dbReference type="PDBsum" id="7Y3F"/>
<dbReference type="EMDB" id="EMD-10461"/>
<dbReference type="EMDB" id="EMD-33593"/>
<dbReference type="EMDB" id="EMD-9807"/>
<dbReference type="EMDB" id="EMD-9918"/>
<dbReference type="SMR" id="P58575"/>
<dbReference type="STRING" id="103690.gene:10496368"/>
<dbReference type="KEGG" id="ana:asr4319"/>
<dbReference type="eggNOG" id="ENOG503313D">
    <property type="taxonomic scope" value="Bacteria"/>
</dbReference>
<dbReference type="OrthoDB" id="427926at2"/>
<dbReference type="Proteomes" id="UP000002483">
    <property type="component" value="Chromosome"/>
</dbReference>
<dbReference type="GO" id="GO:0009538">
    <property type="term" value="C:photosystem I reaction center"/>
    <property type="evidence" value="ECO:0007669"/>
    <property type="project" value="InterPro"/>
</dbReference>
<dbReference type="GO" id="GO:0031676">
    <property type="term" value="C:plasma membrane-derived thylakoid membrane"/>
    <property type="evidence" value="ECO:0007669"/>
    <property type="project" value="UniProtKB-SubCell"/>
</dbReference>
<dbReference type="GO" id="GO:0015979">
    <property type="term" value="P:photosynthesis"/>
    <property type="evidence" value="ECO:0007669"/>
    <property type="project" value="UniProtKB-UniRule"/>
</dbReference>
<dbReference type="Gene3D" id="2.30.30.50">
    <property type="match status" value="1"/>
</dbReference>
<dbReference type="HAMAP" id="MF_00613">
    <property type="entry name" value="PSI_PsaE"/>
    <property type="match status" value="1"/>
</dbReference>
<dbReference type="InterPro" id="IPR008990">
    <property type="entry name" value="Elect_transpt_acc-like_dom_sf"/>
</dbReference>
<dbReference type="InterPro" id="IPR003375">
    <property type="entry name" value="PSI_PsaE"/>
</dbReference>
<dbReference type="NCBIfam" id="NF002745">
    <property type="entry name" value="PRK02749.1"/>
    <property type="match status" value="1"/>
</dbReference>
<dbReference type="PANTHER" id="PTHR34549">
    <property type="entry name" value="PHOTOSYSTEM I REACTION CENTER SUBUNIT IV A, CHLOROPLASTIC-RELATED"/>
    <property type="match status" value="1"/>
</dbReference>
<dbReference type="PANTHER" id="PTHR34549:SF2">
    <property type="entry name" value="PHOTOSYSTEM I SUBUNIT IV"/>
    <property type="match status" value="1"/>
</dbReference>
<dbReference type="Pfam" id="PF02427">
    <property type="entry name" value="PSI_PsaE"/>
    <property type="match status" value="1"/>
</dbReference>
<dbReference type="SUPFAM" id="SSF50090">
    <property type="entry name" value="Electron transport accessory proteins"/>
    <property type="match status" value="1"/>
</dbReference>
<sequence>MVQRGSKVRILRPESYWFQDVGTVASVDQSGIKYPVIVRFDKVNYAGINTNNFAVDELIEVEAPKAKAKK</sequence>
<proteinExistence type="evidence at protein level"/>
<protein>
    <recommendedName>
        <fullName>Photosystem I reaction center subunit IV</fullName>
    </recommendedName>
</protein>
<evidence type="ECO:0000250" key="1"/>
<evidence type="ECO:0000269" key="2">
    <source>
    </source>
</evidence>
<evidence type="ECO:0000305" key="3"/>
<evidence type="ECO:0007829" key="4">
    <source>
        <dbReference type="PDB" id="6K61"/>
    </source>
</evidence>
<evidence type="ECO:0007829" key="5">
    <source>
        <dbReference type="PDB" id="7Y3F"/>
    </source>
</evidence>
<reference key="1">
    <citation type="journal article" date="2001" name="DNA Res.">
        <title>Complete genomic sequence of the filamentous nitrogen-fixing cyanobacterium Anabaena sp. strain PCC 7120.</title>
        <authorList>
            <person name="Kaneko T."/>
            <person name="Nakamura Y."/>
            <person name="Wolk C.P."/>
            <person name="Kuritz T."/>
            <person name="Sasamoto S."/>
            <person name="Watanabe A."/>
            <person name="Iriguchi M."/>
            <person name="Ishikawa A."/>
            <person name="Kawashima K."/>
            <person name="Kimura T."/>
            <person name="Kishida Y."/>
            <person name="Kohara M."/>
            <person name="Matsumoto M."/>
            <person name="Matsuno A."/>
            <person name="Muraki A."/>
            <person name="Nakazaki N."/>
            <person name="Shimpo S."/>
            <person name="Sugimoto M."/>
            <person name="Takazawa M."/>
            <person name="Yamada M."/>
            <person name="Yasuda M."/>
            <person name="Tabata S."/>
        </authorList>
    </citation>
    <scope>NUCLEOTIDE SEQUENCE [LARGE SCALE GENOMIC DNA]</scope>
    <source>
        <strain>PCC 7120 / SAG 25.82 / UTEX 2576</strain>
    </source>
</reference>
<reference key="2">
    <citation type="journal article" date="2014" name="Proc. Natl. Acad. Sci. U.S.A.">
        <title>Attachment of phycobilisomes in an antenna-photosystem I supercomplex of cyanobacteria.</title>
        <authorList>
            <person name="Watanabe M."/>
            <person name="Semchonok D.A."/>
            <person name="Webber-Birungi M.T."/>
            <person name="Ehira S."/>
            <person name="Kondo K."/>
            <person name="Narikawa R."/>
            <person name="Ohmori M."/>
            <person name="Boekema E.J."/>
            <person name="Ikeuchi M."/>
        </authorList>
    </citation>
    <scope>PROTEIN SEQUENCE OF 2-11</scope>
    <scope>SUBUNIT</scope>
    <scope>SUBCELLULAR LOCATION</scope>
    <source>
        <strain>PCC 7120 / SAG 25.82 / UTEX 2576</strain>
    </source>
</reference>
<keyword id="KW-0002">3D-structure</keyword>
<keyword id="KW-0903">Direct protein sequencing</keyword>
<keyword id="KW-0472">Membrane</keyword>
<keyword id="KW-0602">Photosynthesis</keyword>
<keyword id="KW-0603">Photosystem I</keyword>
<keyword id="KW-1185">Reference proteome</keyword>
<keyword id="KW-0793">Thylakoid</keyword>
<comment type="function">
    <text evidence="1">Stabilizes the interaction between PsaC and the PSI core, assists the docking of the ferredoxin to PSI and interacts with ferredoxin-NADP oxidoreductase.</text>
</comment>
<comment type="subunit">
    <text evidence="2">The cyanobacterial PSI reaction center is composed of one copy each of PsaA,B,C,D,E,F,I,J,K,L,M and X, and forms dimeric and tetrameric complexes.</text>
</comment>
<comment type="subcellular location">
    <subcellularLocation>
        <location evidence="2">Cellular thylakoid membrane</location>
        <topology evidence="1">Peripheral membrane protein</topology>
    </subcellularLocation>
</comment>
<comment type="similarity">
    <text evidence="3">Belongs to the PsaE family.</text>
</comment>
<name>PSAE_NOSS1</name>